<dbReference type="EC" id="6.1.1.4" evidence="1"/>
<dbReference type="EMBL" id="BX571857">
    <property type="protein sequence ID" value="CAG43487.1"/>
    <property type="molecule type" value="Genomic_DNA"/>
</dbReference>
<dbReference type="SMR" id="Q6G8G9"/>
<dbReference type="KEGG" id="sas:SAS1684"/>
<dbReference type="HOGENOM" id="CLU_004427_0_0_9"/>
<dbReference type="GO" id="GO:0005829">
    <property type="term" value="C:cytosol"/>
    <property type="evidence" value="ECO:0007669"/>
    <property type="project" value="TreeGrafter"/>
</dbReference>
<dbReference type="GO" id="GO:0002161">
    <property type="term" value="F:aminoacyl-tRNA deacylase activity"/>
    <property type="evidence" value="ECO:0007669"/>
    <property type="project" value="InterPro"/>
</dbReference>
<dbReference type="GO" id="GO:0005524">
    <property type="term" value="F:ATP binding"/>
    <property type="evidence" value="ECO:0007669"/>
    <property type="project" value="UniProtKB-UniRule"/>
</dbReference>
<dbReference type="GO" id="GO:0004823">
    <property type="term" value="F:leucine-tRNA ligase activity"/>
    <property type="evidence" value="ECO:0007669"/>
    <property type="project" value="UniProtKB-UniRule"/>
</dbReference>
<dbReference type="GO" id="GO:0006429">
    <property type="term" value="P:leucyl-tRNA aminoacylation"/>
    <property type="evidence" value="ECO:0007669"/>
    <property type="project" value="UniProtKB-UniRule"/>
</dbReference>
<dbReference type="CDD" id="cd07958">
    <property type="entry name" value="Anticodon_Ia_Leu_BEm"/>
    <property type="match status" value="1"/>
</dbReference>
<dbReference type="CDD" id="cd00812">
    <property type="entry name" value="LeuRS_core"/>
    <property type="match status" value="1"/>
</dbReference>
<dbReference type="FunFam" id="1.10.730.10:FF:000012">
    <property type="entry name" value="Leucine--tRNA ligase"/>
    <property type="match status" value="1"/>
</dbReference>
<dbReference type="FunFam" id="1.10.730.10:FF:000018">
    <property type="entry name" value="Leucine--tRNA ligase"/>
    <property type="match status" value="1"/>
</dbReference>
<dbReference type="FunFam" id="3.10.20.590:FF:000001">
    <property type="entry name" value="Leucine--tRNA ligase"/>
    <property type="match status" value="1"/>
</dbReference>
<dbReference type="FunFam" id="3.40.50.620:FF:000056">
    <property type="entry name" value="Leucine--tRNA ligase"/>
    <property type="match status" value="1"/>
</dbReference>
<dbReference type="FunFam" id="3.40.50.620:FF:000077">
    <property type="entry name" value="Leucine--tRNA ligase"/>
    <property type="match status" value="1"/>
</dbReference>
<dbReference type="Gene3D" id="3.10.20.590">
    <property type="match status" value="1"/>
</dbReference>
<dbReference type="Gene3D" id="3.40.50.620">
    <property type="entry name" value="HUPs"/>
    <property type="match status" value="2"/>
</dbReference>
<dbReference type="Gene3D" id="1.10.730.10">
    <property type="entry name" value="Isoleucyl-tRNA Synthetase, Domain 1"/>
    <property type="match status" value="1"/>
</dbReference>
<dbReference type="HAMAP" id="MF_00049_B">
    <property type="entry name" value="Leu_tRNA_synth_B"/>
    <property type="match status" value="1"/>
</dbReference>
<dbReference type="InterPro" id="IPR001412">
    <property type="entry name" value="aa-tRNA-synth_I_CS"/>
</dbReference>
<dbReference type="InterPro" id="IPR002300">
    <property type="entry name" value="aa-tRNA-synth_Ia"/>
</dbReference>
<dbReference type="InterPro" id="IPR002302">
    <property type="entry name" value="Leu-tRNA-ligase"/>
</dbReference>
<dbReference type="InterPro" id="IPR025709">
    <property type="entry name" value="Leu_tRNA-synth_edit"/>
</dbReference>
<dbReference type="InterPro" id="IPR013155">
    <property type="entry name" value="M/V/L/I-tRNA-synth_anticd-bd"/>
</dbReference>
<dbReference type="InterPro" id="IPR015413">
    <property type="entry name" value="Methionyl/Leucyl_tRNA_Synth"/>
</dbReference>
<dbReference type="InterPro" id="IPR014729">
    <property type="entry name" value="Rossmann-like_a/b/a_fold"/>
</dbReference>
<dbReference type="InterPro" id="IPR009080">
    <property type="entry name" value="tRNAsynth_Ia_anticodon-bd"/>
</dbReference>
<dbReference type="InterPro" id="IPR009008">
    <property type="entry name" value="Val/Leu/Ile-tRNA-synth_edit"/>
</dbReference>
<dbReference type="NCBIfam" id="TIGR00396">
    <property type="entry name" value="leuS_bact"/>
    <property type="match status" value="1"/>
</dbReference>
<dbReference type="PANTHER" id="PTHR43740:SF2">
    <property type="entry name" value="LEUCINE--TRNA LIGASE, MITOCHONDRIAL"/>
    <property type="match status" value="1"/>
</dbReference>
<dbReference type="PANTHER" id="PTHR43740">
    <property type="entry name" value="LEUCYL-TRNA SYNTHETASE"/>
    <property type="match status" value="1"/>
</dbReference>
<dbReference type="Pfam" id="PF08264">
    <property type="entry name" value="Anticodon_1"/>
    <property type="match status" value="1"/>
</dbReference>
<dbReference type="Pfam" id="PF00133">
    <property type="entry name" value="tRNA-synt_1"/>
    <property type="match status" value="1"/>
</dbReference>
<dbReference type="Pfam" id="PF13603">
    <property type="entry name" value="tRNA-synt_1_2"/>
    <property type="match status" value="1"/>
</dbReference>
<dbReference type="Pfam" id="PF09334">
    <property type="entry name" value="tRNA-synt_1g"/>
    <property type="match status" value="1"/>
</dbReference>
<dbReference type="PRINTS" id="PR00985">
    <property type="entry name" value="TRNASYNTHLEU"/>
</dbReference>
<dbReference type="SUPFAM" id="SSF47323">
    <property type="entry name" value="Anticodon-binding domain of a subclass of class I aminoacyl-tRNA synthetases"/>
    <property type="match status" value="1"/>
</dbReference>
<dbReference type="SUPFAM" id="SSF52374">
    <property type="entry name" value="Nucleotidylyl transferase"/>
    <property type="match status" value="1"/>
</dbReference>
<dbReference type="SUPFAM" id="SSF50677">
    <property type="entry name" value="ValRS/IleRS/LeuRS editing domain"/>
    <property type="match status" value="1"/>
</dbReference>
<dbReference type="PROSITE" id="PS00178">
    <property type="entry name" value="AA_TRNA_LIGASE_I"/>
    <property type="match status" value="1"/>
</dbReference>
<evidence type="ECO:0000255" key="1">
    <source>
        <dbReference type="HAMAP-Rule" id="MF_00049"/>
    </source>
</evidence>
<proteinExistence type="inferred from homology"/>
<organism>
    <name type="scientific">Staphylococcus aureus (strain MSSA476)</name>
    <dbReference type="NCBI Taxonomy" id="282459"/>
    <lineage>
        <taxon>Bacteria</taxon>
        <taxon>Bacillati</taxon>
        <taxon>Bacillota</taxon>
        <taxon>Bacilli</taxon>
        <taxon>Bacillales</taxon>
        <taxon>Staphylococcaceae</taxon>
        <taxon>Staphylococcus</taxon>
    </lineage>
</organism>
<sequence length="806" mass="91871">MNYNHNQIEKKWQDYWDENKTFKTNDNLGQKKFYALDMFPYPSGAGLHVGHPEGYTATDIISRYKRMQGYNVLHPMGWDAFGLPAEQYALDTGNDPREFTKKNIQTFKRQIKELGFSYDWDREVNTTDPEYYKWTQWIFIQLYNKGLAYVDEVAVNWCPALGTVLSNEEVIDGVSERGGHPVYRKPMKQWVLKITEYADQLLADLDDLDWPESLKDMQRNWIGRSEGAKVSFDVDNTEAEGKVEVFTTRPDTIYGASFLVLSPEHALVNSITTDEYKEKVKAYQTEASKKSDLERTDLAKDKSGVFTGAYAINPLSGEKVQIWIADYVLSTYGTGAIMAVPAHDDRDYEFAKKFDLPIIEVIEGGNVEEAAYTGEGKHINSGELDGLENEAAITKAIQLLEQKGAGEKKVNYKLRDWLFSRQRYWGEPIPVIHWEDGTMTTVPEEELPLLLPETDEIKPSGTGESPLANIDSFVNVVDEKTGMKGRRETNTMPQWAGSCWYYLRYIDPKNENMLADPEKLKHWLPVDLYIGGVEHAVLHLLYARFWHKVLYDLGIVPTKEPFQKLFNQGMILGEGNEKMSKSKGNVINPDDIVQSHGADTLRLYEMFMGPLDAAIAWSEKGLDGSRRFLDRVWRLMVNEDGTLSSKIVTTNNKSLDKVYNQTVKKVTEDFETLGFNTAISQLMVFINECYKVDEVYKPYIEGFVKMLAPIAPHIGEELWSKLGHEESITYQPWPTYDEALLVDDEVEIVVQVNGKLRAKIKIAKDTSKEEMQEIALSNDNVKASIEGKDIMKVIAVPQKLVNIVAK</sequence>
<gene>
    <name evidence="1" type="primary">leuS</name>
    <name type="ordered locus">SAS1684</name>
</gene>
<protein>
    <recommendedName>
        <fullName evidence="1">Leucine--tRNA ligase</fullName>
        <ecNumber evidence="1">6.1.1.4</ecNumber>
    </recommendedName>
    <alternativeName>
        <fullName evidence="1">Leucyl-tRNA synthetase</fullName>
        <shortName evidence="1">LeuRS</shortName>
    </alternativeName>
</protein>
<keyword id="KW-0030">Aminoacyl-tRNA synthetase</keyword>
<keyword id="KW-0067">ATP-binding</keyword>
<keyword id="KW-0963">Cytoplasm</keyword>
<keyword id="KW-0436">Ligase</keyword>
<keyword id="KW-0547">Nucleotide-binding</keyword>
<keyword id="KW-0648">Protein biosynthesis</keyword>
<name>SYL_STAAS</name>
<feature type="chain" id="PRO_0000152086" description="Leucine--tRNA ligase">
    <location>
        <begin position="1"/>
        <end position="806"/>
    </location>
</feature>
<feature type="short sequence motif" description="'HIGH' region">
    <location>
        <begin position="40"/>
        <end position="51"/>
    </location>
</feature>
<feature type="short sequence motif" description="'KMSKS' region">
    <location>
        <begin position="578"/>
        <end position="582"/>
    </location>
</feature>
<feature type="binding site" evidence="1">
    <location>
        <position position="581"/>
    </location>
    <ligand>
        <name>ATP</name>
        <dbReference type="ChEBI" id="CHEBI:30616"/>
    </ligand>
</feature>
<reference key="1">
    <citation type="journal article" date="2004" name="Proc. Natl. Acad. Sci. U.S.A.">
        <title>Complete genomes of two clinical Staphylococcus aureus strains: evidence for the rapid evolution of virulence and drug resistance.</title>
        <authorList>
            <person name="Holden M.T.G."/>
            <person name="Feil E.J."/>
            <person name="Lindsay J.A."/>
            <person name="Peacock S.J."/>
            <person name="Day N.P.J."/>
            <person name="Enright M.C."/>
            <person name="Foster T.J."/>
            <person name="Moore C.E."/>
            <person name="Hurst L."/>
            <person name="Atkin R."/>
            <person name="Barron A."/>
            <person name="Bason N."/>
            <person name="Bentley S.D."/>
            <person name="Chillingworth C."/>
            <person name="Chillingworth T."/>
            <person name="Churcher C."/>
            <person name="Clark L."/>
            <person name="Corton C."/>
            <person name="Cronin A."/>
            <person name="Doggett J."/>
            <person name="Dowd L."/>
            <person name="Feltwell T."/>
            <person name="Hance Z."/>
            <person name="Harris B."/>
            <person name="Hauser H."/>
            <person name="Holroyd S."/>
            <person name="Jagels K."/>
            <person name="James K.D."/>
            <person name="Lennard N."/>
            <person name="Line A."/>
            <person name="Mayes R."/>
            <person name="Moule S."/>
            <person name="Mungall K."/>
            <person name="Ormond D."/>
            <person name="Quail M.A."/>
            <person name="Rabbinowitsch E."/>
            <person name="Rutherford K.M."/>
            <person name="Sanders M."/>
            <person name="Sharp S."/>
            <person name="Simmonds M."/>
            <person name="Stevens K."/>
            <person name="Whitehead S."/>
            <person name="Barrell B.G."/>
            <person name="Spratt B.G."/>
            <person name="Parkhill J."/>
        </authorList>
    </citation>
    <scope>NUCLEOTIDE SEQUENCE [LARGE SCALE GENOMIC DNA]</scope>
    <source>
        <strain>MSSA476</strain>
    </source>
</reference>
<comment type="catalytic activity">
    <reaction evidence="1">
        <text>tRNA(Leu) + L-leucine + ATP = L-leucyl-tRNA(Leu) + AMP + diphosphate</text>
        <dbReference type="Rhea" id="RHEA:11688"/>
        <dbReference type="Rhea" id="RHEA-COMP:9613"/>
        <dbReference type="Rhea" id="RHEA-COMP:9622"/>
        <dbReference type="ChEBI" id="CHEBI:30616"/>
        <dbReference type="ChEBI" id="CHEBI:33019"/>
        <dbReference type="ChEBI" id="CHEBI:57427"/>
        <dbReference type="ChEBI" id="CHEBI:78442"/>
        <dbReference type="ChEBI" id="CHEBI:78494"/>
        <dbReference type="ChEBI" id="CHEBI:456215"/>
        <dbReference type="EC" id="6.1.1.4"/>
    </reaction>
</comment>
<comment type="subcellular location">
    <subcellularLocation>
        <location evidence="1">Cytoplasm</location>
    </subcellularLocation>
</comment>
<comment type="similarity">
    <text evidence="1">Belongs to the class-I aminoacyl-tRNA synthetase family.</text>
</comment>
<accession>Q6G8G9</accession>